<keyword id="KW-0010">Activator</keyword>
<keyword id="KW-0238">DNA-binding</keyword>
<keyword id="KW-0479">Metal-binding</keyword>
<keyword id="KW-0539">Nucleus</keyword>
<keyword id="KW-0675">Receptor</keyword>
<keyword id="KW-1185">Reference proteome</keyword>
<keyword id="KW-0804">Transcription</keyword>
<keyword id="KW-0805">Transcription regulation</keyword>
<keyword id="KW-0862">Zinc</keyword>
<keyword id="KW-0863">Zinc-finger</keyword>
<evidence type="ECO:0000250" key="1"/>
<evidence type="ECO:0000255" key="2"/>
<evidence type="ECO:0000255" key="3">
    <source>
        <dbReference type="PROSITE-ProRule" id="PRU00407"/>
    </source>
</evidence>
<evidence type="ECO:0000255" key="4">
    <source>
        <dbReference type="PROSITE-ProRule" id="PRU01189"/>
    </source>
</evidence>
<evidence type="ECO:0000256" key="5">
    <source>
        <dbReference type="SAM" id="MobiDB-lite"/>
    </source>
</evidence>
<evidence type="ECO:0000269" key="6">
    <source>
    </source>
</evidence>
<evidence type="ECO:0000269" key="7">
    <source>
    </source>
</evidence>
<evidence type="ECO:0000305" key="8"/>
<evidence type="ECO:0000312" key="9">
    <source>
        <dbReference type="EMBL" id="AAB68760.1"/>
    </source>
</evidence>
<evidence type="ECO:0000312" key="10">
    <source>
        <dbReference type="EMBL" id="AAC59722.1"/>
    </source>
</evidence>
<evidence type="ECO:0000312" key="11">
    <source>
        <dbReference type="EMBL" id="AAH54649.1"/>
    </source>
</evidence>
<evidence type="ECO:0000312" key="12">
    <source>
        <dbReference type="ZFIN" id="ZDB-GENE-980526-436"/>
    </source>
</evidence>
<name>RXRBA_DANRE</name>
<gene>
    <name type="primary">rxrba</name>
    <name type="synonym">nr2b2a</name>
    <name type="synonym">rxrb</name>
    <name evidence="12" type="synonym">rxre</name>
</gene>
<sequence length="471" mass="51597">MGDSRDSRSPDSSSVSSPPSGQRSPPLAPSAAAMTSLPPITSAVNSPISSMGSPFSVISSSLGSPCLPGTPSVGYGPISSPQINSTVSMSGLHAVSSSDDVKPPFGLKPLSSHSPGPMVSQKRLCAICGDRSSGKHYGVYSCEGCKGFFKRTVRKDLSYTCRDNKDCLVDKRQRNRCQYCRYQKCLAMGMKREVVQDERQRSVQEERQRNKERDGEVESSSAANEEMPVEKILEAEMAVEQKTELHADGSSGGSSPNDPVTNICQAADKQLFTLVEWAKRIPHFSELSLDDQVILLRAGWNELLIASFSHRSITVKDGILLATGLHVHRNSAHSAGVGAIFDRESAHNAEVGAIFDRVLTELVSKMRDMQMDKTELGCLRAIILFNPDAKGLSSPSEVELLREKVYASLEAYCKQRYPDQQGRFAKLLLRLPALRSIGLKCLEHLFFFKLIGDTPIDTFLMEMLEAPHQLT</sequence>
<feature type="chain" id="PRO_0000053575" description="Retinoic acid receptor RXR-beta-A">
    <location>
        <begin position="1"/>
        <end position="471"/>
    </location>
</feature>
<feature type="domain" description="NR LBD" evidence="4">
    <location>
        <begin position="224"/>
        <end position="467"/>
    </location>
</feature>
<feature type="DNA-binding region" description="Nuclear receptor" evidence="3">
    <location>
        <begin position="122"/>
        <end position="197"/>
    </location>
</feature>
<feature type="zinc finger region" description="NR C4-type" evidence="3">
    <location>
        <begin position="125"/>
        <end position="145"/>
    </location>
</feature>
<feature type="zinc finger region" description="NR C4-type" evidence="3">
    <location>
        <begin position="161"/>
        <end position="185"/>
    </location>
</feature>
<feature type="region of interest" description="Modulating" evidence="1">
    <location>
        <begin position="1"/>
        <end position="102"/>
    </location>
</feature>
<feature type="region of interest" description="Disordered" evidence="5">
    <location>
        <begin position="1"/>
        <end position="34"/>
    </location>
</feature>
<feature type="region of interest" description="Disordered" evidence="5">
    <location>
        <begin position="196"/>
        <end position="226"/>
    </location>
</feature>
<feature type="region of interest" description="Hinge" evidence="1">
    <location>
        <begin position="198"/>
        <end position="221"/>
    </location>
</feature>
<feature type="compositionally biased region" description="Low complexity" evidence="5">
    <location>
        <begin position="10"/>
        <end position="25"/>
    </location>
</feature>
<feature type="compositionally biased region" description="Basic and acidic residues" evidence="5">
    <location>
        <begin position="196"/>
        <end position="216"/>
    </location>
</feature>
<feature type="sequence conflict" description="In Ref. 4; AAB68760." evidence="8" ref="4">
    <original>S</original>
    <variation>N</variation>
    <location>
        <position position="158"/>
    </location>
</feature>
<feature type="sequence conflict" description="In Ref. 4; AAB68760." evidence="8" ref="4">
    <original>R</original>
    <variation>S</variation>
    <location>
        <position position="181"/>
    </location>
</feature>
<protein>
    <recommendedName>
        <fullName>Retinoic acid receptor RXR-beta-A</fullName>
    </recommendedName>
    <alternativeName>
        <fullName>Nuclear receptor subfamily 2 group B member 2-A</fullName>
    </alternativeName>
    <alternativeName>
        <fullName>Retinoid X receptor beta-A</fullName>
    </alternativeName>
</protein>
<accession>Q7SYN5</accession>
<accession>O42556</accession>
<accession>Q1LV98</accession>
<accession>Q8AW18</accession>
<accession>Q90418</accession>
<comment type="function">
    <text evidence="1 7">Receptor for retinoic acid. Retinoic acid receptors bind as heterodimers to their target response elements in response to their ligands, all-trans or 9-cis retinoic acid, and regulate gene expression in various biological processes. The rar/rxr heterodimers bind to the retinoic acid response elements (RARE) composed of tandem 5'-AGGTCA-3' sites known as DR1-DR5. The high affinity ligand for rxrs is 9-cis retinoic acid (By similarity).</text>
</comment>
<comment type="subunit">
    <text evidence="1">Homodimer (By similarity). Heterodimer; with a rar molecule (By similarity). Binds DNA preferentially as a rar/rxr heterodimer (By similarity). Heterodimerizes with rarga.</text>
</comment>
<comment type="subcellular location">
    <subcellularLocation>
        <location>Nucleus</location>
    </subcellularLocation>
</comment>
<comment type="tissue specificity">
    <text evidence="6">Shows uniform expression from the blastula to mid-gastrula stages. At 12 hours post-fertilization (hpf), expressed ubiquitously but more weakly. At 24 hpf, restricted to the ventral diencephalon, pharangeal endoderm and trunk and tail mesoderm; mesoderm expression is in medial cells of each somite along the dorsoventral axis, forming stripes. At 48 hpf, expressed in forebrain, eye, midbrain and anterior hindbrain.</text>
</comment>
<comment type="developmental stage">
    <text evidence="6 7">Expressed both maternally and zygotically.</text>
</comment>
<comment type="domain">
    <text>Composed of three domains: a modulating N-terminal domain, a DNA-binding domain and a C-terminal ligand-binding domain.</text>
</comment>
<comment type="similarity">
    <text evidence="2">Belongs to the nuclear hormone receptor family. NR2 subfamily.</text>
</comment>
<comment type="sequence caution" evidence="8">
    <conflict type="erroneous initiation">
        <sequence resource="EMBL-CDS" id="AAC59722"/>
    </conflict>
    <text>Truncated N-terminus.</text>
</comment>
<comment type="sequence caution" evidence="8">
    <conflict type="erroneous gene model prediction">
        <sequence resource="EMBL-CDS" id="CAK11469"/>
    </conflict>
</comment>
<dbReference type="EMBL" id="AL672176">
    <property type="protein sequence ID" value="CAD54660.1"/>
    <property type="molecule type" value="Genomic_DNA"/>
</dbReference>
<dbReference type="EMBL" id="BX890617">
    <property type="protein sequence ID" value="CAK11469.1"/>
    <property type="status" value="ALT_SEQ"/>
    <property type="molecule type" value="Genomic_DNA"/>
</dbReference>
<dbReference type="EMBL" id="BC054649">
    <property type="protein sequence ID" value="AAH54649.1"/>
    <property type="molecule type" value="mRNA"/>
</dbReference>
<dbReference type="EMBL" id="U29942">
    <property type="protein sequence ID" value="AAC59722.1"/>
    <property type="status" value="ALT_INIT"/>
    <property type="molecule type" value="mRNA"/>
</dbReference>
<dbReference type="EMBL" id="U93483">
    <property type="protein sequence ID" value="AAB68760.1"/>
    <property type="molecule type" value="Genomic_DNA"/>
</dbReference>
<dbReference type="PIR" id="I50517">
    <property type="entry name" value="I50517"/>
</dbReference>
<dbReference type="RefSeq" id="NP_571350.1">
    <property type="nucleotide sequence ID" value="NM_131275.1"/>
</dbReference>
<dbReference type="RefSeq" id="XP_005159467.1">
    <property type="nucleotide sequence ID" value="XM_005159410.4"/>
</dbReference>
<dbReference type="RefSeq" id="XP_009292301.1">
    <property type="nucleotide sequence ID" value="XM_009294026.2"/>
</dbReference>
<dbReference type="SMR" id="Q7SYN5"/>
<dbReference type="FunCoup" id="Q7SYN5">
    <property type="interactions" value="1385"/>
</dbReference>
<dbReference type="STRING" id="7955.ENSDARP00000125725"/>
<dbReference type="PaxDb" id="7955-ENSDARP00000015784"/>
<dbReference type="Ensembl" id="ENSDART00000102075">
    <property type="protein sequence ID" value="ENSDARP00000125725"/>
    <property type="gene ID" value="ENSDARG00000078954"/>
</dbReference>
<dbReference type="GeneID" id="30530"/>
<dbReference type="KEGG" id="dre:30530"/>
<dbReference type="AGR" id="ZFIN:ZDB-GENE-980526-436"/>
<dbReference type="CTD" id="30530"/>
<dbReference type="ZFIN" id="ZDB-GENE-980526-436">
    <property type="gene designation" value="rxrba"/>
</dbReference>
<dbReference type="eggNOG" id="KOG3575">
    <property type="taxonomic scope" value="Eukaryota"/>
</dbReference>
<dbReference type="InParanoid" id="Q7SYN5"/>
<dbReference type="OMA" id="INMFRRN"/>
<dbReference type="OrthoDB" id="5873264at2759"/>
<dbReference type="PhylomeDB" id="Q7SYN5"/>
<dbReference type="TreeFam" id="TF352097"/>
<dbReference type="Reactome" id="R-DRE-5362517">
    <property type="pathway name" value="Signaling by Retinoic Acid"/>
</dbReference>
<dbReference type="SignaLink" id="Q7SYN5"/>
<dbReference type="PRO" id="PR:Q7SYN5"/>
<dbReference type="Proteomes" id="UP000000437">
    <property type="component" value="Chromosome 19"/>
</dbReference>
<dbReference type="Bgee" id="ENSDARG00000078954">
    <property type="expression patterns" value="Expressed in pharyngeal gill and 28 other cell types or tissues"/>
</dbReference>
<dbReference type="ExpressionAtlas" id="Q7SYN5">
    <property type="expression patterns" value="baseline"/>
</dbReference>
<dbReference type="GO" id="GO:0090575">
    <property type="term" value="C:RNA polymerase II transcription regulator complex"/>
    <property type="evidence" value="ECO:0000318"/>
    <property type="project" value="GO_Central"/>
</dbReference>
<dbReference type="GO" id="GO:0004879">
    <property type="term" value="F:nuclear receptor activity"/>
    <property type="evidence" value="ECO:0000318"/>
    <property type="project" value="GO_Central"/>
</dbReference>
<dbReference type="GO" id="GO:0003707">
    <property type="term" value="F:nuclear steroid receptor activity"/>
    <property type="evidence" value="ECO:0007669"/>
    <property type="project" value="InterPro"/>
</dbReference>
<dbReference type="GO" id="GO:0044323">
    <property type="term" value="F:retinoic acid-responsive element binding"/>
    <property type="evidence" value="ECO:0000318"/>
    <property type="project" value="GO_Central"/>
</dbReference>
<dbReference type="GO" id="GO:0008270">
    <property type="term" value="F:zinc ion binding"/>
    <property type="evidence" value="ECO:0007669"/>
    <property type="project" value="UniProtKB-KW"/>
</dbReference>
<dbReference type="GO" id="GO:0030154">
    <property type="term" value="P:cell differentiation"/>
    <property type="evidence" value="ECO:0000318"/>
    <property type="project" value="GO_Central"/>
</dbReference>
<dbReference type="GO" id="GO:0045892">
    <property type="term" value="P:negative regulation of DNA-templated transcription"/>
    <property type="evidence" value="ECO:0000314"/>
    <property type="project" value="ZFIN"/>
</dbReference>
<dbReference type="GO" id="GO:0007399">
    <property type="term" value="P:nervous system development"/>
    <property type="evidence" value="ECO:0000318"/>
    <property type="project" value="GO_Central"/>
</dbReference>
<dbReference type="GO" id="GO:0045944">
    <property type="term" value="P:positive regulation of transcription by RNA polymerase II"/>
    <property type="evidence" value="ECO:0000318"/>
    <property type="project" value="GO_Central"/>
</dbReference>
<dbReference type="GO" id="GO:0006355">
    <property type="term" value="P:regulation of DNA-templated transcription"/>
    <property type="evidence" value="ECO:0000314"/>
    <property type="project" value="UniProtKB"/>
</dbReference>
<dbReference type="GO" id="GO:0048384">
    <property type="term" value="P:retinoic acid receptor signaling pathway"/>
    <property type="evidence" value="ECO:0000318"/>
    <property type="project" value="GO_Central"/>
</dbReference>
<dbReference type="CDD" id="cd06956">
    <property type="entry name" value="NR_DBD_RXR"/>
    <property type="match status" value="1"/>
</dbReference>
<dbReference type="CDD" id="cd06943">
    <property type="entry name" value="NR_LBD_RXR_like"/>
    <property type="match status" value="1"/>
</dbReference>
<dbReference type="FunFam" id="1.10.565.10:FF:000002">
    <property type="entry name" value="Retinoic acid receptor RXR-alpha"/>
    <property type="match status" value="1"/>
</dbReference>
<dbReference type="FunFam" id="3.30.50.10:FF:000005">
    <property type="entry name" value="Retinoic acid receptor RXR-alpha"/>
    <property type="match status" value="1"/>
</dbReference>
<dbReference type="Gene3D" id="3.30.50.10">
    <property type="entry name" value="Erythroid Transcription Factor GATA-1, subunit A"/>
    <property type="match status" value="1"/>
</dbReference>
<dbReference type="Gene3D" id="1.10.565.10">
    <property type="entry name" value="Retinoid X Receptor"/>
    <property type="match status" value="1"/>
</dbReference>
<dbReference type="InterPro" id="IPR035500">
    <property type="entry name" value="NHR-like_dom_sf"/>
</dbReference>
<dbReference type="InterPro" id="IPR021780">
    <property type="entry name" value="Nuc_recep-AF1"/>
</dbReference>
<dbReference type="InterPro" id="IPR000536">
    <property type="entry name" value="Nucl_hrmn_rcpt_lig-bd"/>
</dbReference>
<dbReference type="InterPro" id="IPR050274">
    <property type="entry name" value="Nuclear_hormone_rcpt_NR2"/>
</dbReference>
<dbReference type="InterPro" id="IPR001723">
    <property type="entry name" value="Nuclear_hrmn_rcpt"/>
</dbReference>
<dbReference type="InterPro" id="IPR000003">
    <property type="entry name" value="Retinoid-X_rcpt/HNF4"/>
</dbReference>
<dbReference type="InterPro" id="IPR001628">
    <property type="entry name" value="Znf_hrmn_rcpt"/>
</dbReference>
<dbReference type="InterPro" id="IPR013088">
    <property type="entry name" value="Znf_NHR/GATA"/>
</dbReference>
<dbReference type="PANTHER" id="PTHR24083">
    <property type="entry name" value="NUCLEAR HORMONE RECEPTOR"/>
    <property type="match status" value="1"/>
</dbReference>
<dbReference type="Pfam" id="PF00104">
    <property type="entry name" value="Hormone_recep"/>
    <property type="match status" value="1"/>
</dbReference>
<dbReference type="Pfam" id="PF11825">
    <property type="entry name" value="Nuc_recep-AF1"/>
    <property type="match status" value="1"/>
</dbReference>
<dbReference type="Pfam" id="PF00105">
    <property type="entry name" value="zf-C4"/>
    <property type="match status" value="1"/>
</dbReference>
<dbReference type="PRINTS" id="PR00545">
    <property type="entry name" value="RETINOIDXR"/>
</dbReference>
<dbReference type="PRINTS" id="PR00398">
    <property type="entry name" value="STRDHORMONER"/>
</dbReference>
<dbReference type="PRINTS" id="PR00047">
    <property type="entry name" value="STROIDFINGER"/>
</dbReference>
<dbReference type="SMART" id="SM00430">
    <property type="entry name" value="HOLI"/>
    <property type="match status" value="1"/>
</dbReference>
<dbReference type="SMART" id="SM00399">
    <property type="entry name" value="ZnF_C4"/>
    <property type="match status" value="1"/>
</dbReference>
<dbReference type="SUPFAM" id="SSF57716">
    <property type="entry name" value="Glucocorticoid receptor-like (DNA-binding domain)"/>
    <property type="match status" value="1"/>
</dbReference>
<dbReference type="SUPFAM" id="SSF48508">
    <property type="entry name" value="Nuclear receptor ligand-binding domain"/>
    <property type="match status" value="1"/>
</dbReference>
<dbReference type="PROSITE" id="PS51843">
    <property type="entry name" value="NR_LBD"/>
    <property type="match status" value="1"/>
</dbReference>
<dbReference type="PROSITE" id="PS00031">
    <property type="entry name" value="NUCLEAR_REC_DBD_1"/>
    <property type="match status" value="1"/>
</dbReference>
<dbReference type="PROSITE" id="PS51030">
    <property type="entry name" value="NUCLEAR_REC_DBD_2"/>
    <property type="match status" value="1"/>
</dbReference>
<reference key="1">
    <citation type="journal article" date="2013" name="Nature">
        <title>The zebrafish reference genome sequence and its relationship to the human genome.</title>
        <authorList>
            <person name="Howe K."/>
            <person name="Clark M.D."/>
            <person name="Torroja C.F."/>
            <person name="Torrance J."/>
            <person name="Berthelot C."/>
            <person name="Muffato M."/>
            <person name="Collins J.E."/>
            <person name="Humphray S."/>
            <person name="McLaren K."/>
            <person name="Matthews L."/>
            <person name="McLaren S."/>
            <person name="Sealy I."/>
            <person name="Caccamo M."/>
            <person name="Churcher C."/>
            <person name="Scott C."/>
            <person name="Barrett J.C."/>
            <person name="Koch R."/>
            <person name="Rauch G.J."/>
            <person name="White S."/>
            <person name="Chow W."/>
            <person name="Kilian B."/>
            <person name="Quintais L.T."/>
            <person name="Guerra-Assuncao J.A."/>
            <person name="Zhou Y."/>
            <person name="Gu Y."/>
            <person name="Yen J."/>
            <person name="Vogel J.H."/>
            <person name="Eyre T."/>
            <person name="Redmond S."/>
            <person name="Banerjee R."/>
            <person name="Chi J."/>
            <person name="Fu B."/>
            <person name="Langley E."/>
            <person name="Maguire S.F."/>
            <person name="Laird G.K."/>
            <person name="Lloyd D."/>
            <person name="Kenyon E."/>
            <person name="Donaldson S."/>
            <person name="Sehra H."/>
            <person name="Almeida-King J."/>
            <person name="Loveland J."/>
            <person name="Trevanion S."/>
            <person name="Jones M."/>
            <person name="Quail M."/>
            <person name="Willey D."/>
            <person name="Hunt A."/>
            <person name="Burton J."/>
            <person name="Sims S."/>
            <person name="McLay K."/>
            <person name="Plumb B."/>
            <person name="Davis J."/>
            <person name="Clee C."/>
            <person name="Oliver K."/>
            <person name="Clark R."/>
            <person name="Riddle C."/>
            <person name="Elliot D."/>
            <person name="Threadgold G."/>
            <person name="Harden G."/>
            <person name="Ware D."/>
            <person name="Begum S."/>
            <person name="Mortimore B."/>
            <person name="Kerry G."/>
            <person name="Heath P."/>
            <person name="Phillimore B."/>
            <person name="Tracey A."/>
            <person name="Corby N."/>
            <person name="Dunn M."/>
            <person name="Johnson C."/>
            <person name="Wood J."/>
            <person name="Clark S."/>
            <person name="Pelan S."/>
            <person name="Griffiths G."/>
            <person name="Smith M."/>
            <person name="Glithero R."/>
            <person name="Howden P."/>
            <person name="Barker N."/>
            <person name="Lloyd C."/>
            <person name="Stevens C."/>
            <person name="Harley J."/>
            <person name="Holt K."/>
            <person name="Panagiotidis G."/>
            <person name="Lovell J."/>
            <person name="Beasley H."/>
            <person name="Henderson C."/>
            <person name="Gordon D."/>
            <person name="Auger K."/>
            <person name="Wright D."/>
            <person name="Collins J."/>
            <person name="Raisen C."/>
            <person name="Dyer L."/>
            <person name="Leung K."/>
            <person name="Robertson L."/>
            <person name="Ambridge K."/>
            <person name="Leongamornlert D."/>
            <person name="McGuire S."/>
            <person name="Gilderthorp R."/>
            <person name="Griffiths C."/>
            <person name="Manthravadi D."/>
            <person name="Nichol S."/>
            <person name="Barker G."/>
            <person name="Whitehead S."/>
            <person name="Kay M."/>
            <person name="Brown J."/>
            <person name="Murnane C."/>
            <person name="Gray E."/>
            <person name="Humphries M."/>
            <person name="Sycamore N."/>
            <person name="Barker D."/>
            <person name="Saunders D."/>
            <person name="Wallis J."/>
            <person name="Babbage A."/>
            <person name="Hammond S."/>
            <person name="Mashreghi-Mohammadi M."/>
            <person name="Barr L."/>
            <person name="Martin S."/>
            <person name="Wray P."/>
            <person name="Ellington A."/>
            <person name="Matthews N."/>
            <person name="Ellwood M."/>
            <person name="Woodmansey R."/>
            <person name="Clark G."/>
            <person name="Cooper J."/>
            <person name="Tromans A."/>
            <person name="Grafham D."/>
            <person name="Skuce C."/>
            <person name="Pandian R."/>
            <person name="Andrews R."/>
            <person name="Harrison E."/>
            <person name="Kimberley A."/>
            <person name="Garnett J."/>
            <person name="Fosker N."/>
            <person name="Hall R."/>
            <person name="Garner P."/>
            <person name="Kelly D."/>
            <person name="Bird C."/>
            <person name="Palmer S."/>
            <person name="Gehring I."/>
            <person name="Berger A."/>
            <person name="Dooley C.M."/>
            <person name="Ersan-Urun Z."/>
            <person name="Eser C."/>
            <person name="Geiger H."/>
            <person name="Geisler M."/>
            <person name="Karotki L."/>
            <person name="Kirn A."/>
            <person name="Konantz J."/>
            <person name="Konantz M."/>
            <person name="Oberlander M."/>
            <person name="Rudolph-Geiger S."/>
            <person name="Teucke M."/>
            <person name="Lanz C."/>
            <person name="Raddatz G."/>
            <person name="Osoegawa K."/>
            <person name="Zhu B."/>
            <person name="Rapp A."/>
            <person name="Widaa S."/>
            <person name="Langford C."/>
            <person name="Yang F."/>
            <person name="Schuster S.C."/>
            <person name="Carter N.P."/>
            <person name="Harrow J."/>
            <person name="Ning Z."/>
            <person name="Herrero J."/>
            <person name="Searle S.M."/>
            <person name="Enright A."/>
            <person name="Geisler R."/>
            <person name="Plasterk R.H."/>
            <person name="Lee C."/>
            <person name="Westerfield M."/>
            <person name="de Jong P.J."/>
            <person name="Zon L.I."/>
            <person name="Postlethwait J.H."/>
            <person name="Nusslein-Volhard C."/>
            <person name="Hubbard T.J."/>
            <person name="Roest Crollius H."/>
            <person name="Rogers J."/>
            <person name="Stemple D.L."/>
        </authorList>
    </citation>
    <scope>NUCLEOTIDE SEQUENCE [LARGE SCALE GENOMIC DNA]</scope>
    <source>
        <strain>Tuebingen</strain>
    </source>
</reference>
<reference evidence="8 11" key="2">
    <citation type="submission" date="2003-07" db="EMBL/GenBank/DDBJ databases">
        <authorList>
            <consortium name="NIH - Zebrafish Gene Collection (ZGC) project"/>
        </authorList>
    </citation>
    <scope>NUCLEOTIDE SEQUENCE [LARGE SCALE MRNA]</scope>
    <source>
        <strain>SJD</strain>
    </source>
</reference>
<reference evidence="8 10" key="3">
    <citation type="journal article" date="1995" name="Mol. Cell. Biol.">
        <title>New retinoid X receptor subtypes in zebra fish (Danio rerio) differentially modulate transcription and do not bind 9-cis retinoic acid.</title>
        <authorList>
            <person name="Jones B.B."/>
            <person name="Ohno C.K."/>
            <person name="Allenby G."/>
            <person name="Boffa M.B."/>
            <person name="Levin A.A."/>
            <person name="Grippo J.F."/>
            <person name="Petkovich M."/>
        </authorList>
    </citation>
    <scope>NUCLEOTIDE SEQUENCE [MRNA] OF 6-471</scope>
    <scope>FUNCTION</scope>
    <scope>HETERODIMERIZATION WITH RARGA</scope>
    <scope>DEVELOPMENTAL STAGE</scope>
</reference>
<reference evidence="8 9" key="4">
    <citation type="journal article" date="1997" name="Proc. Natl. Acad. Sci. U.S.A.">
        <title>Ligand binding was acquired during evolution of nuclear receptors.</title>
        <authorList>
            <person name="Escriva H."/>
            <person name="Safi R."/>
            <person name="Haenni C."/>
            <person name="Langlois M.-C."/>
            <person name="Saumitou-Laprade P."/>
            <person name="Stehelin D."/>
            <person name="Capron A."/>
            <person name="Pierce R."/>
            <person name="Laudet V."/>
        </authorList>
    </citation>
    <scope>NUCLEOTIDE SEQUENCE [GENOMIC DNA] OF 142-181</scope>
</reference>
<reference key="5">
    <citation type="journal article" date="2006" name="Gene Expr. Patterns">
        <title>Characterization of retinoid-X receptor genes rxra, rxrba, rxrbb and rxrg during zebrafish development.</title>
        <authorList>
            <person name="Tallafuss A."/>
            <person name="Hale L.A."/>
            <person name="Yan Y.-L."/>
            <person name="Dudley L."/>
            <person name="Eisen J.S."/>
            <person name="Postlethwait J.H."/>
        </authorList>
    </citation>
    <scope>TISSUE SPECIFICITY</scope>
    <scope>DEVELOPMENTAL STAGE</scope>
</reference>
<proteinExistence type="evidence at transcript level"/>
<organism>
    <name type="scientific">Danio rerio</name>
    <name type="common">Zebrafish</name>
    <name type="synonym">Brachydanio rerio</name>
    <dbReference type="NCBI Taxonomy" id="7955"/>
    <lineage>
        <taxon>Eukaryota</taxon>
        <taxon>Metazoa</taxon>
        <taxon>Chordata</taxon>
        <taxon>Craniata</taxon>
        <taxon>Vertebrata</taxon>
        <taxon>Euteleostomi</taxon>
        <taxon>Actinopterygii</taxon>
        <taxon>Neopterygii</taxon>
        <taxon>Teleostei</taxon>
        <taxon>Ostariophysi</taxon>
        <taxon>Cypriniformes</taxon>
        <taxon>Danionidae</taxon>
        <taxon>Danioninae</taxon>
        <taxon>Danio</taxon>
    </lineage>
</organism>